<protein>
    <recommendedName>
        <fullName evidence="1">Arginine/ornithine antiporter</fullName>
    </recommendedName>
</protein>
<organism>
    <name type="scientific">Pseudomonas putida</name>
    <name type="common">Arthrobacter siderocapsulatus</name>
    <dbReference type="NCBI Taxonomy" id="303"/>
    <lineage>
        <taxon>Bacteria</taxon>
        <taxon>Pseudomonadati</taxon>
        <taxon>Pseudomonadota</taxon>
        <taxon>Gammaproteobacteria</taxon>
        <taxon>Pseudomonadales</taxon>
        <taxon>Pseudomonadaceae</taxon>
        <taxon>Pseudomonas</taxon>
    </lineage>
</organism>
<name>ARCD_PSEPU</name>
<sequence length="16" mass="1644">GALVAAYGLYDGFLTL</sequence>
<accession>P41147</accession>
<proteinExistence type="inferred from homology"/>
<dbReference type="EMBL" id="U07185">
    <property type="protein sequence ID" value="AAA16963.1"/>
    <property type="molecule type" value="Unassigned_DNA"/>
</dbReference>
<dbReference type="eggNOG" id="COG0531">
    <property type="taxonomic scope" value="Bacteria"/>
</dbReference>
<dbReference type="GO" id="GO:0005886">
    <property type="term" value="C:plasma membrane"/>
    <property type="evidence" value="ECO:0007669"/>
    <property type="project" value="UniProtKB-SubCell"/>
</dbReference>
<dbReference type="GO" id="GO:0015297">
    <property type="term" value="F:antiporter activity"/>
    <property type="evidence" value="ECO:0007669"/>
    <property type="project" value="UniProtKB-KW"/>
</dbReference>
<dbReference type="GO" id="GO:0006865">
    <property type="term" value="P:amino acid transport"/>
    <property type="evidence" value="ECO:0007669"/>
    <property type="project" value="UniProtKB-KW"/>
</dbReference>
<keyword id="KW-0029">Amino-acid transport</keyword>
<keyword id="KW-0050">Antiport</keyword>
<keyword id="KW-0997">Cell inner membrane</keyword>
<keyword id="KW-1003">Cell membrane</keyword>
<keyword id="KW-0472">Membrane</keyword>
<keyword id="KW-0812">Transmembrane</keyword>
<keyword id="KW-0813">Transport</keyword>
<gene>
    <name type="primary">arcD</name>
</gene>
<evidence type="ECO:0000250" key="1">
    <source>
        <dbReference type="UniProtKB" id="P18275"/>
    </source>
</evidence>
<evidence type="ECO:0000305" key="2"/>
<feature type="chain" id="PRO_0000054240" description="Arginine/ornithine antiporter">
    <location>
        <begin position="1" status="less than"/>
        <end position="16"/>
    </location>
</feature>
<feature type="non-terminal residue">
    <location>
        <position position="1"/>
    </location>
</feature>
<reference key="1">
    <citation type="submission" date="1994-02" db="EMBL/GenBank/DDBJ databases">
        <authorList>
            <person name="Wilson S.D."/>
            <person name="Wang M."/>
            <person name="Filpula D."/>
        </authorList>
    </citation>
    <scope>NUCLEOTIDE SEQUENCE [GENOMIC DNA]</scope>
    <source>
        <strain>ATCC 4359 / IAM 1506 / JCM 20188</strain>
    </source>
</reference>
<comment type="function">
    <text evidence="1">Catalyzes electroneutral exchange between arginine and ornithine to allow high-efficiency energy conversion in the arginine deiminase pathway.</text>
</comment>
<comment type="catalytic activity">
    <reaction evidence="1">
        <text>L-ornithine(in) + L-arginine(out) = L-ornithine(out) + L-arginine(in)</text>
        <dbReference type="Rhea" id="RHEA:34991"/>
        <dbReference type="ChEBI" id="CHEBI:32682"/>
        <dbReference type="ChEBI" id="CHEBI:46911"/>
    </reaction>
    <physiologicalReaction direction="left-to-right" evidence="1">
        <dbReference type="Rhea" id="RHEA:34992"/>
    </physiologicalReaction>
</comment>
<comment type="subcellular location">
    <subcellularLocation>
        <location evidence="1">Cell inner membrane</location>
        <topology evidence="1">Multi-pass membrane protein</topology>
    </subcellularLocation>
</comment>
<comment type="similarity">
    <text evidence="2">Belongs to the amino acid-polyamine-organocation (APC) superfamily. Basic amino acid/polyamine antiporter (APA) (TC 2.A.3.2) family.</text>
</comment>